<keyword id="KW-0378">Hydrolase</keyword>
<keyword id="KW-0663">Pyridoxal phosphate</keyword>
<organism>
    <name type="scientific">Paraburkholderia phytofirmans (strain DSM 17436 / LMG 22146 / PsJN)</name>
    <name type="common">Burkholderia phytofirmans</name>
    <dbReference type="NCBI Taxonomy" id="398527"/>
    <lineage>
        <taxon>Bacteria</taxon>
        <taxon>Pseudomonadati</taxon>
        <taxon>Pseudomonadota</taxon>
        <taxon>Betaproteobacteria</taxon>
        <taxon>Burkholderiales</taxon>
        <taxon>Burkholderiaceae</taxon>
        <taxon>Paraburkholderia</taxon>
    </lineage>
</organism>
<comment type="function">
    <text evidence="1">Catalyzes a cyclopropane ring-opening reaction, the irreversible conversion of 1-aminocyclopropane-1-carboxylate (ACC) to ammonia and alpha-ketobutyrate. Allows growth on ACC as a nitrogen source.</text>
</comment>
<comment type="catalytic activity">
    <reaction evidence="1">
        <text>1-aminocyclopropane-1-carboxylate + H2O = 2-oxobutanoate + NH4(+)</text>
        <dbReference type="Rhea" id="RHEA:16933"/>
        <dbReference type="ChEBI" id="CHEBI:15377"/>
        <dbReference type="ChEBI" id="CHEBI:16763"/>
        <dbReference type="ChEBI" id="CHEBI:28938"/>
        <dbReference type="ChEBI" id="CHEBI:58360"/>
        <dbReference type="EC" id="3.5.99.7"/>
    </reaction>
</comment>
<comment type="cofactor">
    <cofactor evidence="1">
        <name>pyridoxal 5'-phosphate</name>
        <dbReference type="ChEBI" id="CHEBI:597326"/>
    </cofactor>
</comment>
<comment type="subunit">
    <text evidence="1">Homotrimer.</text>
</comment>
<comment type="similarity">
    <text evidence="1">Belongs to the ACC deaminase/D-cysteine desulfhydrase family.</text>
</comment>
<name>1A1D_PARPJ</name>
<evidence type="ECO:0000255" key="1">
    <source>
        <dbReference type="HAMAP-Rule" id="MF_00807"/>
    </source>
</evidence>
<gene>
    <name evidence="1" type="primary">acdS</name>
    <name type="ordered locus">Bphyt_5397</name>
</gene>
<dbReference type="EC" id="3.5.99.7" evidence="1"/>
<dbReference type="EMBL" id="CP001053">
    <property type="protein sequence ID" value="ACD19755.1"/>
    <property type="molecule type" value="Genomic_DNA"/>
</dbReference>
<dbReference type="RefSeq" id="WP_012427263.1">
    <property type="nucleotide sequence ID" value="NC_010676.1"/>
</dbReference>
<dbReference type="SMR" id="B2TBV3"/>
<dbReference type="STRING" id="398527.Bphyt_5397"/>
<dbReference type="KEGG" id="bpy:Bphyt_5397"/>
<dbReference type="eggNOG" id="COG2515">
    <property type="taxonomic scope" value="Bacteria"/>
</dbReference>
<dbReference type="HOGENOM" id="CLU_048897_2_1_4"/>
<dbReference type="OrthoDB" id="9801249at2"/>
<dbReference type="BRENDA" id="3.5.99.7">
    <property type="organism ID" value="8800"/>
</dbReference>
<dbReference type="Proteomes" id="UP000001739">
    <property type="component" value="Chromosome 2"/>
</dbReference>
<dbReference type="GO" id="GO:0008660">
    <property type="term" value="F:1-aminocyclopropane-1-carboxylate deaminase activity"/>
    <property type="evidence" value="ECO:0007669"/>
    <property type="project" value="UniProtKB-UniRule"/>
</dbReference>
<dbReference type="GO" id="GO:0019148">
    <property type="term" value="F:D-cysteine desulfhydrase activity"/>
    <property type="evidence" value="ECO:0007669"/>
    <property type="project" value="TreeGrafter"/>
</dbReference>
<dbReference type="GO" id="GO:0030170">
    <property type="term" value="F:pyridoxal phosphate binding"/>
    <property type="evidence" value="ECO:0007669"/>
    <property type="project" value="InterPro"/>
</dbReference>
<dbReference type="GO" id="GO:0018871">
    <property type="term" value="P:1-aminocyclopropane-1-carboxylate metabolic process"/>
    <property type="evidence" value="ECO:0007669"/>
    <property type="project" value="UniProtKB-UniRule"/>
</dbReference>
<dbReference type="GO" id="GO:0009310">
    <property type="term" value="P:amine catabolic process"/>
    <property type="evidence" value="ECO:0007669"/>
    <property type="project" value="InterPro"/>
</dbReference>
<dbReference type="CDD" id="cd06449">
    <property type="entry name" value="ACCD"/>
    <property type="match status" value="1"/>
</dbReference>
<dbReference type="FunFam" id="3.40.50.1100:FF:000053">
    <property type="entry name" value="1-aminocyclopropane-1-carboxylate deaminase"/>
    <property type="match status" value="1"/>
</dbReference>
<dbReference type="Gene3D" id="3.40.50.1100">
    <property type="match status" value="2"/>
</dbReference>
<dbReference type="HAMAP" id="MF_00807">
    <property type="entry name" value="ACC_deaminase"/>
    <property type="match status" value="1"/>
</dbReference>
<dbReference type="InterPro" id="IPR027278">
    <property type="entry name" value="ACCD_DCysDesulf"/>
</dbReference>
<dbReference type="InterPro" id="IPR005965">
    <property type="entry name" value="ACP_carboxylate_deaminase"/>
</dbReference>
<dbReference type="InterPro" id="IPR020601">
    <property type="entry name" value="ACP_carboxylate_deaminase_bac"/>
</dbReference>
<dbReference type="InterPro" id="IPR001926">
    <property type="entry name" value="TrpB-like_PALP"/>
</dbReference>
<dbReference type="InterPro" id="IPR036052">
    <property type="entry name" value="TrpB-like_PALP_sf"/>
</dbReference>
<dbReference type="NCBIfam" id="TIGR01274">
    <property type="entry name" value="ACC_deam"/>
    <property type="match status" value="1"/>
</dbReference>
<dbReference type="PANTHER" id="PTHR43780">
    <property type="entry name" value="1-AMINOCYCLOPROPANE-1-CARBOXYLATE DEAMINASE-RELATED"/>
    <property type="match status" value="1"/>
</dbReference>
<dbReference type="PANTHER" id="PTHR43780:SF2">
    <property type="entry name" value="1-AMINOCYCLOPROPANE-1-CARBOXYLATE DEAMINASE-RELATED"/>
    <property type="match status" value="1"/>
</dbReference>
<dbReference type="Pfam" id="PF00291">
    <property type="entry name" value="PALP"/>
    <property type="match status" value="1"/>
</dbReference>
<dbReference type="PIRSF" id="PIRSF006278">
    <property type="entry name" value="ACCD_DCysDesulf"/>
    <property type="match status" value="1"/>
</dbReference>
<dbReference type="SUPFAM" id="SSF53686">
    <property type="entry name" value="Tryptophan synthase beta subunit-like PLP-dependent enzymes"/>
    <property type="match status" value="1"/>
</dbReference>
<reference key="1">
    <citation type="journal article" date="2011" name="J. Bacteriol.">
        <title>Complete genome sequence of the plant growth-promoting endophyte Burkholderia phytofirmans strain PsJN.</title>
        <authorList>
            <person name="Weilharter A."/>
            <person name="Mitter B."/>
            <person name="Shin M.V."/>
            <person name="Chain P.S."/>
            <person name="Nowak J."/>
            <person name="Sessitsch A."/>
        </authorList>
    </citation>
    <scope>NUCLEOTIDE SEQUENCE [LARGE SCALE GENOMIC DNA]</scope>
    <source>
        <strain>DSM 17436 / LMG 22146 / PsJN</strain>
    </source>
</reference>
<proteinExistence type="inferred from homology"/>
<sequence length="338" mass="36648">MNLQRFPRYPLTFGPTPIQPLKRLSDHLGGKVHLYAKREDCNSGFAFGGNKTRKLEYLIPEALAQGCDTLVSIGGIQSNQTRQVAAVAAHLGMKCVLVQENWVNYSDAVYDRVGNIQMSRILGADVRLVADGFDIGFRKSWEDALESVRAAGGKPYAIPAGCSDHPLGGLGFVGFAEEVRQQEAELGFKFDYIVVCSVTGSTQAGMVVGFADDGRAERVIGIDASAKPAQTREQITRIAKQTAEQVGLGRDITSKDVVLDERFGGPEYGLPNDGTLEAIRLCARLEGVLTDPVYEGKSMHGMIEMVRNGEFPEGSRVLYAHLGGVPALNGYSFIFRNG</sequence>
<protein>
    <recommendedName>
        <fullName evidence="1">1-aminocyclopropane-1-carboxylate deaminase</fullName>
        <shortName evidence="1">ACC deaminase</shortName>
        <shortName evidence="1">ACCD</shortName>
        <ecNumber evidence="1">3.5.99.7</ecNumber>
    </recommendedName>
</protein>
<accession>B2TBV3</accession>
<feature type="chain" id="PRO_1000134011" description="1-aminocyclopropane-1-carboxylate deaminase">
    <location>
        <begin position="1"/>
        <end position="338"/>
    </location>
</feature>
<feature type="active site" description="Nucleophile" evidence="1">
    <location>
        <position position="78"/>
    </location>
</feature>
<feature type="modified residue" description="N6-(pyridoxal phosphate)lysine" evidence="1">
    <location>
        <position position="51"/>
    </location>
</feature>